<name>MOAA_MYCSK</name>
<reference key="1">
    <citation type="submission" date="2006-12" db="EMBL/GenBank/DDBJ databases">
        <title>Complete sequence of chromosome of Mycobacterium sp. KMS.</title>
        <authorList>
            <consortium name="US DOE Joint Genome Institute"/>
            <person name="Copeland A."/>
            <person name="Lucas S."/>
            <person name="Lapidus A."/>
            <person name="Barry K."/>
            <person name="Detter J.C."/>
            <person name="Glavina del Rio T."/>
            <person name="Hammon N."/>
            <person name="Israni S."/>
            <person name="Dalin E."/>
            <person name="Tice H."/>
            <person name="Pitluck S."/>
            <person name="Kiss H."/>
            <person name="Brettin T."/>
            <person name="Bruce D."/>
            <person name="Han C."/>
            <person name="Tapia R."/>
            <person name="Gilna P."/>
            <person name="Schmutz J."/>
            <person name="Larimer F."/>
            <person name="Land M."/>
            <person name="Hauser L."/>
            <person name="Kyrpides N."/>
            <person name="Mikhailova N."/>
            <person name="Miller C.D."/>
            <person name="Richardson P."/>
        </authorList>
    </citation>
    <scope>NUCLEOTIDE SEQUENCE [LARGE SCALE GENOMIC DNA]</scope>
    <source>
        <strain>KMS</strain>
    </source>
</reference>
<evidence type="ECO:0000255" key="1">
    <source>
        <dbReference type="HAMAP-Rule" id="MF_01225"/>
    </source>
</evidence>
<evidence type="ECO:0000255" key="2">
    <source>
        <dbReference type="PROSITE-ProRule" id="PRU01266"/>
    </source>
</evidence>
<organism>
    <name type="scientific">Mycobacterium sp. (strain KMS)</name>
    <dbReference type="NCBI Taxonomy" id="189918"/>
    <lineage>
        <taxon>Bacteria</taxon>
        <taxon>Bacillati</taxon>
        <taxon>Actinomycetota</taxon>
        <taxon>Actinomycetes</taxon>
        <taxon>Mycobacteriales</taxon>
        <taxon>Mycobacteriaceae</taxon>
        <taxon>Mycobacterium</taxon>
    </lineage>
</organism>
<sequence>MTVTPLGVPTISRPAAGMPTTGPLVDTFGRIATDLRVSLTDRCNLRCTYCMPAEGLDWLPGEQLLSADELIRLLRIAVTRLGITNVRFTGGEPLVVRHLEDVVAATGALRPRPEMAMTTNGIGLAKRARALKAAGLDRVNVSLDSVDAAHFARITRRDRLGDVLAGLAAAKEAGLTPVKVNAVLDPDTGLDDAVSLLRYCLDHGYQLRIIEQMPLDAEHQWQRGRSLEAAGILAALRAHFTLVPDSKPRGSAPAQLWRVDGGTATVGVIASVSEAFCAACDRTRLTADGQVRNCLFAREESDLRRLLRGGADDDAIEQAWRAAMWTKAAGHGINDPGFEQPSRPMSAIGG</sequence>
<comment type="function">
    <text evidence="1">Catalyzes the cyclization of GTP to (8S)-3',8-cyclo-7,8-dihydroguanosine 5'-triphosphate.</text>
</comment>
<comment type="catalytic activity">
    <reaction evidence="1">
        <text>GTP + AH2 + S-adenosyl-L-methionine = (8S)-3',8-cyclo-7,8-dihydroguanosine 5'-triphosphate + 5'-deoxyadenosine + L-methionine + A + H(+)</text>
        <dbReference type="Rhea" id="RHEA:49576"/>
        <dbReference type="ChEBI" id="CHEBI:13193"/>
        <dbReference type="ChEBI" id="CHEBI:15378"/>
        <dbReference type="ChEBI" id="CHEBI:17319"/>
        <dbReference type="ChEBI" id="CHEBI:17499"/>
        <dbReference type="ChEBI" id="CHEBI:37565"/>
        <dbReference type="ChEBI" id="CHEBI:57844"/>
        <dbReference type="ChEBI" id="CHEBI:59789"/>
        <dbReference type="ChEBI" id="CHEBI:131766"/>
        <dbReference type="EC" id="4.1.99.22"/>
    </reaction>
</comment>
<comment type="cofactor">
    <cofactor evidence="1">
        <name>[4Fe-4S] cluster</name>
        <dbReference type="ChEBI" id="CHEBI:49883"/>
    </cofactor>
    <text evidence="1">Binds 2 [4Fe-4S] clusters. Binds 1 [4Fe-4S] cluster coordinated with 3 cysteines and an exchangeable S-adenosyl-L-methionine and 1 [4Fe-4S] cluster coordinated with 3 cysteines and the GTP-derived substrate.</text>
</comment>
<comment type="pathway">
    <text evidence="1">Cofactor biosynthesis; molybdopterin biosynthesis.</text>
</comment>
<comment type="subunit">
    <text evidence="1">Monomer and homodimer.</text>
</comment>
<comment type="similarity">
    <text evidence="1">Belongs to the radical SAM superfamily. MoaA family.</text>
</comment>
<dbReference type="EC" id="4.1.99.22" evidence="1"/>
<dbReference type="EMBL" id="CP000518">
    <property type="protein sequence ID" value="ABL93755.1"/>
    <property type="molecule type" value="Genomic_DNA"/>
</dbReference>
<dbReference type="SMR" id="A1ULP7"/>
<dbReference type="STRING" id="189918.Mkms_4564"/>
<dbReference type="KEGG" id="mkm:Mkms_4564"/>
<dbReference type="HOGENOM" id="CLU_009273_0_1_11"/>
<dbReference type="OrthoDB" id="9763993at2"/>
<dbReference type="UniPathway" id="UPA00344"/>
<dbReference type="GO" id="GO:0051539">
    <property type="term" value="F:4 iron, 4 sulfur cluster binding"/>
    <property type="evidence" value="ECO:0007669"/>
    <property type="project" value="UniProtKB-UniRule"/>
</dbReference>
<dbReference type="GO" id="GO:0061799">
    <property type="term" value="F:cyclic pyranopterin monophosphate synthase activity"/>
    <property type="evidence" value="ECO:0007669"/>
    <property type="project" value="TreeGrafter"/>
</dbReference>
<dbReference type="GO" id="GO:0061798">
    <property type="term" value="F:GTP 3',8'-cyclase activity"/>
    <property type="evidence" value="ECO:0007669"/>
    <property type="project" value="UniProtKB-UniRule"/>
</dbReference>
<dbReference type="GO" id="GO:0005525">
    <property type="term" value="F:GTP binding"/>
    <property type="evidence" value="ECO:0007669"/>
    <property type="project" value="UniProtKB-UniRule"/>
</dbReference>
<dbReference type="GO" id="GO:0046872">
    <property type="term" value="F:metal ion binding"/>
    <property type="evidence" value="ECO:0007669"/>
    <property type="project" value="UniProtKB-KW"/>
</dbReference>
<dbReference type="GO" id="GO:1904047">
    <property type="term" value="F:S-adenosyl-L-methionine binding"/>
    <property type="evidence" value="ECO:0007669"/>
    <property type="project" value="UniProtKB-UniRule"/>
</dbReference>
<dbReference type="GO" id="GO:0006777">
    <property type="term" value="P:Mo-molybdopterin cofactor biosynthetic process"/>
    <property type="evidence" value="ECO:0007669"/>
    <property type="project" value="UniProtKB-UniRule"/>
</dbReference>
<dbReference type="CDD" id="cd01335">
    <property type="entry name" value="Radical_SAM"/>
    <property type="match status" value="1"/>
</dbReference>
<dbReference type="CDD" id="cd21117">
    <property type="entry name" value="Twitch_MoaA"/>
    <property type="match status" value="1"/>
</dbReference>
<dbReference type="Gene3D" id="3.20.20.70">
    <property type="entry name" value="Aldolase class I"/>
    <property type="match status" value="1"/>
</dbReference>
<dbReference type="HAMAP" id="MF_01225_B">
    <property type="entry name" value="MoaA_B"/>
    <property type="match status" value="1"/>
</dbReference>
<dbReference type="InterPro" id="IPR013785">
    <property type="entry name" value="Aldolase_TIM"/>
</dbReference>
<dbReference type="InterPro" id="IPR006638">
    <property type="entry name" value="Elp3/MiaA/NifB-like_rSAM"/>
</dbReference>
<dbReference type="InterPro" id="IPR013483">
    <property type="entry name" value="MoaA"/>
</dbReference>
<dbReference type="InterPro" id="IPR000385">
    <property type="entry name" value="MoaA_NifB_PqqE_Fe-S-bd_CS"/>
</dbReference>
<dbReference type="InterPro" id="IPR010505">
    <property type="entry name" value="MoaA_twitch"/>
</dbReference>
<dbReference type="InterPro" id="IPR050105">
    <property type="entry name" value="MoCo_biosynth_MoaA/MoaC"/>
</dbReference>
<dbReference type="InterPro" id="IPR007197">
    <property type="entry name" value="rSAM"/>
</dbReference>
<dbReference type="NCBIfam" id="TIGR02666">
    <property type="entry name" value="moaA"/>
    <property type="match status" value="1"/>
</dbReference>
<dbReference type="PANTHER" id="PTHR22960:SF0">
    <property type="entry name" value="MOLYBDENUM COFACTOR BIOSYNTHESIS PROTEIN 1"/>
    <property type="match status" value="1"/>
</dbReference>
<dbReference type="PANTHER" id="PTHR22960">
    <property type="entry name" value="MOLYBDOPTERIN COFACTOR SYNTHESIS PROTEIN A"/>
    <property type="match status" value="1"/>
</dbReference>
<dbReference type="Pfam" id="PF06463">
    <property type="entry name" value="Mob_synth_C"/>
    <property type="match status" value="1"/>
</dbReference>
<dbReference type="Pfam" id="PF04055">
    <property type="entry name" value="Radical_SAM"/>
    <property type="match status" value="1"/>
</dbReference>
<dbReference type="SFLD" id="SFLDG01383">
    <property type="entry name" value="cyclic_pyranopterin_phosphate"/>
    <property type="match status" value="1"/>
</dbReference>
<dbReference type="SFLD" id="SFLDG01072">
    <property type="entry name" value="dehydrogenase_like"/>
    <property type="match status" value="1"/>
</dbReference>
<dbReference type="SMART" id="SM00729">
    <property type="entry name" value="Elp3"/>
    <property type="match status" value="1"/>
</dbReference>
<dbReference type="SUPFAM" id="SSF102114">
    <property type="entry name" value="Radical SAM enzymes"/>
    <property type="match status" value="1"/>
</dbReference>
<dbReference type="PROSITE" id="PS01305">
    <property type="entry name" value="MOAA_NIFB_PQQE"/>
    <property type="match status" value="1"/>
</dbReference>
<dbReference type="PROSITE" id="PS51918">
    <property type="entry name" value="RADICAL_SAM"/>
    <property type="match status" value="1"/>
</dbReference>
<keyword id="KW-0004">4Fe-4S</keyword>
<keyword id="KW-0342">GTP-binding</keyword>
<keyword id="KW-0408">Iron</keyword>
<keyword id="KW-0411">Iron-sulfur</keyword>
<keyword id="KW-0456">Lyase</keyword>
<keyword id="KW-0479">Metal-binding</keyword>
<keyword id="KW-0501">Molybdenum cofactor biosynthesis</keyword>
<keyword id="KW-0547">Nucleotide-binding</keyword>
<keyword id="KW-0949">S-adenosyl-L-methionine</keyword>
<feature type="chain" id="PRO_1000054203" description="GTP 3',8-cyclase">
    <location>
        <begin position="1"/>
        <end position="350"/>
    </location>
</feature>
<feature type="domain" description="Radical SAM core" evidence="2">
    <location>
        <begin position="27"/>
        <end position="245"/>
    </location>
</feature>
<feature type="binding site" evidence="1">
    <location>
        <position position="36"/>
    </location>
    <ligand>
        <name>GTP</name>
        <dbReference type="ChEBI" id="CHEBI:37565"/>
    </ligand>
</feature>
<feature type="binding site" evidence="1">
    <location>
        <position position="43"/>
    </location>
    <ligand>
        <name>[4Fe-4S] cluster</name>
        <dbReference type="ChEBI" id="CHEBI:49883"/>
        <label>1</label>
        <note>4Fe-4S-S-AdoMet</note>
    </ligand>
</feature>
<feature type="binding site" evidence="1">
    <location>
        <position position="47"/>
    </location>
    <ligand>
        <name>[4Fe-4S] cluster</name>
        <dbReference type="ChEBI" id="CHEBI:49883"/>
        <label>1</label>
        <note>4Fe-4S-S-AdoMet</note>
    </ligand>
</feature>
<feature type="binding site" evidence="1">
    <location>
        <position position="49"/>
    </location>
    <ligand>
        <name>S-adenosyl-L-methionine</name>
        <dbReference type="ChEBI" id="CHEBI:59789"/>
    </ligand>
</feature>
<feature type="binding site" evidence="1">
    <location>
        <position position="50"/>
    </location>
    <ligand>
        <name>[4Fe-4S] cluster</name>
        <dbReference type="ChEBI" id="CHEBI:49883"/>
        <label>1</label>
        <note>4Fe-4S-S-AdoMet</note>
    </ligand>
</feature>
<feature type="binding site" evidence="1">
    <location>
        <position position="87"/>
    </location>
    <ligand>
        <name>GTP</name>
        <dbReference type="ChEBI" id="CHEBI:37565"/>
    </ligand>
</feature>
<feature type="binding site" evidence="1">
    <location>
        <position position="91"/>
    </location>
    <ligand>
        <name>S-adenosyl-L-methionine</name>
        <dbReference type="ChEBI" id="CHEBI:59789"/>
    </ligand>
</feature>
<feature type="binding site" evidence="1">
    <location>
        <position position="118"/>
    </location>
    <ligand>
        <name>GTP</name>
        <dbReference type="ChEBI" id="CHEBI:37565"/>
    </ligand>
</feature>
<feature type="binding site" evidence="1">
    <location>
        <position position="142"/>
    </location>
    <ligand>
        <name>S-adenosyl-L-methionine</name>
        <dbReference type="ChEBI" id="CHEBI:59789"/>
    </ligand>
</feature>
<feature type="binding site" evidence="1">
    <location>
        <position position="179"/>
    </location>
    <ligand>
        <name>GTP</name>
        <dbReference type="ChEBI" id="CHEBI:37565"/>
    </ligand>
</feature>
<feature type="binding site" evidence="1">
    <location>
        <position position="213"/>
    </location>
    <ligand>
        <name>S-adenosyl-L-methionine</name>
        <dbReference type="ChEBI" id="CHEBI:59789"/>
    </ligand>
</feature>
<feature type="binding site" evidence="1">
    <location>
        <position position="277"/>
    </location>
    <ligand>
        <name>[4Fe-4S] cluster</name>
        <dbReference type="ChEBI" id="CHEBI:49883"/>
        <label>2</label>
        <note>4Fe-4S-substrate</note>
    </ligand>
</feature>
<feature type="binding site" evidence="1">
    <location>
        <position position="280"/>
    </location>
    <ligand>
        <name>[4Fe-4S] cluster</name>
        <dbReference type="ChEBI" id="CHEBI:49883"/>
        <label>2</label>
        <note>4Fe-4S-substrate</note>
    </ligand>
</feature>
<feature type="binding site" evidence="1">
    <location>
        <begin position="282"/>
        <end position="284"/>
    </location>
    <ligand>
        <name>GTP</name>
        <dbReference type="ChEBI" id="CHEBI:37565"/>
    </ligand>
</feature>
<feature type="binding site" evidence="1">
    <location>
        <position position="294"/>
    </location>
    <ligand>
        <name>[4Fe-4S] cluster</name>
        <dbReference type="ChEBI" id="CHEBI:49883"/>
        <label>2</label>
        <note>4Fe-4S-substrate</note>
    </ligand>
</feature>
<proteinExistence type="inferred from homology"/>
<protein>
    <recommendedName>
        <fullName evidence="1">GTP 3',8-cyclase</fullName>
        <ecNumber evidence="1">4.1.99.22</ecNumber>
    </recommendedName>
    <alternativeName>
        <fullName evidence="1">Molybdenum cofactor biosynthesis protein A</fullName>
    </alternativeName>
</protein>
<gene>
    <name evidence="1" type="primary">moaA</name>
    <name type="ordered locus">Mkms_4564</name>
</gene>
<accession>A1ULP7</accession>